<sequence length="76" mass="8305">MTDSVVVRVKPGSHKGPLVEVGPNGELIIYVREPAIDGKANDAVTRLLAAHLQLPKSRVKLVSGATSRFKRFRLSR</sequence>
<keyword id="KW-1185">Reference proteome</keyword>
<reference key="1">
    <citation type="journal article" date="2008" name="PLoS ONE">
        <title>Genetic basis of virulence attenuation revealed by comparative genomic analysis of Mycobacterium tuberculosis strain H37Ra versus H37Rv.</title>
        <authorList>
            <person name="Zheng H."/>
            <person name="Lu L."/>
            <person name="Wang B."/>
            <person name="Pu S."/>
            <person name="Zhang X."/>
            <person name="Zhu G."/>
            <person name="Shi W."/>
            <person name="Zhang L."/>
            <person name="Wang H."/>
            <person name="Wang S."/>
            <person name="Zhao G."/>
            <person name="Zhang Y."/>
        </authorList>
    </citation>
    <scope>NUCLEOTIDE SEQUENCE [LARGE SCALE GENOMIC DNA]</scope>
    <source>
        <strain>ATCC 25177 / H37Ra</strain>
    </source>
</reference>
<feature type="chain" id="PRO_1000056774" description="UPF0235 protein MRA_1997">
    <location>
        <begin position="1"/>
        <end position="76"/>
    </location>
</feature>
<accession>A5U406</accession>
<protein>
    <recommendedName>
        <fullName evidence="1">UPF0235 protein MRA_1997</fullName>
    </recommendedName>
</protein>
<evidence type="ECO:0000255" key="1">
    <source>
        <dbReference type="HAMAP-Rule" id="MF_00634"/>
    </source>
</evidence>
<organism>
    <name type="scientific">Mycobacterium tuberculosis (strain ATCC 25177 / H37Ra)</name>
    <dbReference type="NCBI Taxonomy" id="419947"/>
    <lineage>
        <taxon>Bacteria</taxon>
        <taxon>Bacillati</taxon>
        <taxon>Actinomycetota</taxon>
        <taxon>Actinomycetes</taxon>
        <taxon>Mycobacteriales</taxon>
        <taxon>Mycobacteriaceae</taxon>
        <taxon>Mycobacterium</taxon>
        <taxon>Mycobacterium tuberculosis complex</taxon>
    </lineage>
</organism>
<comment type="similarity">
    <text evidence="1">Belongs to the UPF0235 family.</text>
</comment>
<name>Y1997_MYCTA</name>
<proteinExistence type="inferred from homology"/>
<dbReference type="EMBL" id="CP000611">
    <property type="protein sequence ID" value="ABQ73756.1"/>
    <property type="molecule type" value="Genomic_DNA"/>
</dbReference>
<dbReference type="RefSeq" id="WP_003409980.1">
    <property type="nucleotide sequence ID" value="NZ_CP016972.1"/>
</dbReference>
<dbReference type="SMR" id="A5U406"/>
<dbReference type="KEGG" id="mra:MRA_1997"/>
<dbReference type="eggNOG" id="COG1872">
    <property type="taxonomic scope" value="Bacteria"/>
</dbReference>
<dbReference type="HOGENOM" id="CLU_130694_5_3_11"/>
<dbReference type="Proteomes" id="UP000001988">
    <property type="component" value="Chromosome"/>
</dbReference>
<dbReference type="GO" id="GO:0005737">
    <property type="term" value="C:cytoplasm"/>
    <property type="evidence" value="ECO:0007669"/>
    <property type="project" value="TreeGrafter"/>
</dbReference>
<dbReference type="Gene3D" id="3.30.1200.10">
    <property type="entry name" value="YggU-like"/>
    <property type="match status" value="1"/>
</dbReference>
<dbReference type="HAMAP" id="MF_00634">
    <property type="entry name" value="UPF0235"/>
    <property type="match status" value="1"/>
</dbReference>
<dbReference type="InterPro" id="IPR003746">
    <property type="entry name" value="DUF167"/>
</dbReference>
<dbReference type="InterPro" id="IPR036591">
    <property type="entry name" value="YggU-like_sf"/>
</dbReference>
<dbReference type="NCBIfam" id="TIGR00251">
    <property type="entry name" value="DUF167 family protein"/>
    <property type="match status" value="1"/>
</dbReference>
<dbReference type="PANTHER" id="PTHR13420">
    <property type="entry name" value="UPF0235 PROTEIN C15ORF40"/>
    <property type="match status" value="1"/>
</dbReference>
<dbReference type="PANTHER" id="PTHR13420:SF7">
    <property type="entry name" value="UPF0235 PROTEIN C15ORF40"/>
    <property type="match status" value="1"/>
</dbReference>
<dbReference type="Pfam" id="PF02594">
    <property type="entry name" value="DUF167"/>
    <property type="match status" value="1"/>
</dbReference>
<dbReference type="SMART" id="SM01152">
    <property type="entry name" value="DUF167"/>
    <property type="match status" value="1"/>
</dbReference>
<dbReference type="SUPFAM" id="SSF69786">
    <property type="entry name" value="YggU-like"/>
    <property type="match status" value="1"/>
</dbReference>
<gene>
    <name type="ordered locus">MRA_1997</name>
</gene>